<gene>
    <name evidence="3" type="primary">thnC</name>
    <name type="ORF">THAR02_03177</name>
</gene>
<feature type="chain" id="PRO_0000455678" description="2-oxoglutarate-dependent dioxygenase thnC">
    <location>
        <begin position="1"/>
        <end position="320"/>
    </location>
</feature>
<feature type="domain" description="Fe2OG dioxygenase" evidence="1">
    <location>
        <begin position="174"/>
        <end position="278"/>
    </location>
</feature>
<feature type="binding site" evidence="1">
    <location>
        <position position="199"/>
    </location>
    <ligand>
        <name>Fe cation</name>
        <dbReference type="ChEBI" id="CHEBI:24875"/>
    </ligand>
</feature>
<feature type="binding site" evidence="1">
    <location>
        <position position="201"/>
    </location>
    <ligand>
        <name>Fe cation</name>
        <dbReference type="ChEBI" id="CHEBI:24875"/>
    </ligand>
</feature>
<feature type="binding site" evidence="1">
    <location>
        <position position="258"/>
    </location>
    <ligand>
        <name>Fe cation</name>
        <dbReference type="ChEBI" id="CHEBI:24875"/>
    </ligand>
</feature>
<feature type="binding site" evidence="1">
    <location>
        <position position="268"/>
    </location>
    <ligand>
        <name>2-oxoglutarate</name>
        <dbReference type="ChEBI" id="CHEBI:16810"/>
    </ligand>
</feature>
<sequence>MSEEDISLPIIDLSGYLSPKSPDDRQNVIEQIRDACRDFGFFQLKGHGIPISLQKELLKSLGTLFSMPKEEKMKLSYLENPCRRGYEASGMSMREGDAMPDSKEAYYLGREDPVVEFSGFYGPNVWPNLPEEDFRGPVWEYYQKTSQLGKTIWEVLLQGLGYSTDLMEAFAKRPLVQMKLIRYPSPSVTLPGQFGVGAHNDFGGVTVLLQQAGKDGLEVWLEKQQKWLSVPALEDVYVINCGDMIMKWSGGRYKSVRHRVINKTEGERHSCATFWHGDVFATNPLNPEDPNKETVGQLLVKRFRHQMSIHKEGLAQVGEL</sequence>
<organism>
    <name type="scientific">Trichoderma harzianum</name>
    <name type="common">Hypocrea lixii</name>
    <dbReference type="NCBI Taxonomy" id="5544"/>
    <lineage>
        <taxon>Eukaryota</taxon>
        <taxon>Fungi</taxon>
        <taxon>Dikarya</taxon>
        <taxon>Ascomycota</taxon>
        <taxon>Pezizomycotina</taxon>
        <taxon>Sordariomycetes</taxon>
        <taxon>Hypocreomycetidae</taxon>
        <taxon>Hypocreales</taxon>
        <taxon>Hypocreaceae</taxon>
        <taxon>Trichoderma</taxon>
    </lineage>
</organism>
<dbReference type="EC" id="1.14.11.-" evidence="2"/>
<dbReference type="EMBL" id="JOKZ01000069">
    <property type="protein sequence ID" value="KKP04697.1"/>
    <property type="molecule type" value="Genomic_DNA"/>
</dbReference>
<dbReference type="SMR" id="A0A0F9ZXE3"/>
<dbReference type="OMA" id="PAFWHGD"/>
<dbReference type="OrthoDB" id="288590at2759"/>
<dbReference type="Proteomes" id="UP000034112">
    <property type="component" value="Unassembled WGS sequence"/>
</dbReference>
<dbReference type="GO" id="GO:0051213">
    <property type="term" value="F:dioxygenase activity"/>
    <property type="evidence" value="ECO:0007669"/>
    <property type="project" value="UniProtKB-KW"/>
</dbReference>
<dbReference type="GO" id="GO:0046872">
    <property type="term" value="F:metal ion binding"/>
    <property type="evidence" value="ECO:0007669"/>
    <property type="project" value="UniProtKB-KW"/>
</dbReference>
<dbReference type="GO" id="GO:0044283">
    <property type="term" value="P:small molecule biosynthetic process"/>
    <property type="evidence" value="ECO:0007669"/>
    <property type="project" value="UniProtKB-ARBA"/>
</dbReference>
<dbReference type="Gene3D" id="2.60.120.330">
    <property type="entry name" value="B-lactam Antibiotic, Isopenicillin N Synthase, Chain"/>
    <property type="match status" value="1"/>
</dbReference>
<dbReference type="InterPro" id="IPR026992">
    <property type="entry name" value="DIOX_N"/>
</dbReference>
<dbReference type="InterPro" id="IPR044861">
    <property type="entry name" value="IPNS-like_FE2OG_OXY"/>
</dbReference>
<dbReference type="InterPro" id="IPR027443">
    <property type="entry name" value="IPNS-like_sf"/>
</dbReference>
<dbReference type="InterPro" id="IPR005123">
    <property type="entry name" value="Oxoglu/Fe-dep_dioxygenase_dom"/>
</dbReference>
<dbReference type="PANTHER" id="PTHR10209:SF881">
    <property type="entry name" value="FI07970P-RELATED"/>
    <property type="match status" value="1"/>
</dbReference>
<dbReference type="PANTHER" id="PTHR10209">
    <property type="entry name" value="OXIDOREDUCTASE, 2OG-FE II OXYGENASE FAMILY PROTEIN"/>
    <property type="match status" value="1"/>
</dbReference>
<dbReference type="Pfam" id="PF03171">
    <property type="entry name" value="2OG-FeII_Oxy"/>
    <property type="match status" value="1"/>
</dbReference>
<dbReference type="Pfam" id="PF14226">
    <property type="entry name" value="DIOX_N"/>
    <property type="match status" value="1"/>
</dbReference>
<dbReference type="SUPFAM" id="SSF51197">
    <property type="entry name" value="Clavaminate synthase-like"/>
    <property type="match status" value="1"/>
</dbReference>
<dbReference type="PROSITE" id="PS51471">
    <property type="entry name" value="FE2OG_OXY"/>
    <property type="match status" value="1"/>
</dbReference>
<accession>A0A0F9ZXE3</accession>
<name>THNC_TRIHA</name>
<protein>
    <recommendedName>
        <fullName evidence="3">2-oxoglutarate-dependent dioxygenase thnC</fullName>
        <ecNumber evidence="2">1.14.11.-</ecNumber>
    </recommendedName>
    <alternativeName>
        <fullName evidence="3">Trihazone biosynthesis cluster protein C</fullName>
    </alternativeName>
</protein>
<reference key="1">
    <citation type="journal article" date="2015" name="Genome Announc.">
        <title>Draft whole-genome sequence of the biocontrol agent Trichoderma harzianum T6776.</title>
        <authorList>
            <person name="Baroncelli R."/>
            <person name="Piaggeschi G."/>
            <person name="Fiorini L."/>
            <person name="Bertolini E."/>
            <person name="Zapparata A."/>
            <person name="Pe M.E."/>
            <person name="Sarrocco S."/>
            <person name="Vannacci G."/>
        </authorList>
    </citation>
    <scope>NUCLEOTIDE SEQUENCE [LARGE SCALE GENOMIC DNA]</scope>
    <source>
        <strain>T6776</strain>
    </source>
</reference>
<reference key="2">
    <citation type="journal article" date="2021" name="Org. Biomol. Chem.">
        <title>Genome mining of cryptic tetronate natural products from a PKS-NRPS encoding gene cluster in Trichoderma harzianum t-22.</title>
        <authorList>
            <person name="Zhu Y."/>
            <person name="Wang J."/>
            <person name="Mou P."/>
            <person name="Yan Y."/>
            <person name="Chen M."/>
            <person name="Tang Y."/>
        </authorList>
    </citation>
    <scope>FUNCTION</scope>
    <scope>CATALYTIC ACTIVITY</scope>
    <scope>PATHWAY</scope>
</reference>
<comment type="function">
    <text evidence="2">2-oxoglutarate-dependent dioxygenase; part of the gene cluster that produces the tetronate natural products trihazones (PubMed:33570538). ThnC catalyzes the oxidative decarboxylation of trihazone A to trihazone D (PubMed:33570538). The C4 hydrogen is first abstracted by the iron-oxo species generated in ThnC to give a tertiary radical at C4 (PubMed:33570538). This is followed by decarboxylation and removal of the second electron by the FeIII-OH center to give trihazone D (PubMed:33570538). The pathway begins with the formation of trihazone A by the hybrid PKS-NRPS synthetase thnA and the trans-enoyl reductase thnE. Trihazone A is further decarboxylated by the 2-oxoglutarate-dependent dioxygenase thnC to produce trihazone D. The function of the FAD-dependent monooxygenase thnD has still to be identified (PubMed:33570538).</text>
</comment>
<comment type="catalytic activity">
    <reaction evidence="2">
        <text>trihazone A + 2-oxoglutarate + O2 + H(+) = trihazone D + succinate + 2 CO2 + H2O</text>
        <dbReference type="Rhea" id="RHEA:72019"/>
        <dbReference type="ChEBI" id="CHEBI:15377"/>
        <dbReference type="ChEBI" id="CHEBI:15378"/>
        <dbReference type="ChEBI" id="CHEBI:15379"/>
        <dbReference type="ChEBI" id="CHEBI:16526"/>
        <dbReference type="ChEBI" id="CHEBI:16810"/>
        <dbReference type="ChEBI" id="CHEBI:30031"/>
        <dbReference type="ChEBI" id="CHEBI:190400"/>
        <dbReference type="ChEBI" id="CHEBI:190401"/>
    </reaction>
    <physiologicalReaction direction="left-to-right" evidence="2">
        <dbReference type="Rhea" id="RHEA:72020"/>
    </physiologicalReaction>
</comment>
<comment type="cofactor">
    <cofactor evidence="1">
        <name>Fe(2+)</name>
        <dbReference type="ChEBI" id="CHEBI:29033"/>
    </cofactor>
    <text evidence="1">Binds 1 Fe(2+) ion per subunit.</text>
</comment>
<comment type="pathway">
    <text evidence="2">Secondary metabolite biosynthesis.</text>
</comment>
<comment type="similarity">
    <text evidence="4">Belongs to the iron/ascorbate-dependent oxidoreductase family.</text>
</comment>
<evidence type="ECO:0000255" key="1">
    <source>
        <dbReference type="PROSITE-ProRule" id="PRU00805"/>
    </source>
</evidence>
<evidence type="ECO:0000269" key="2">
    <source>
    </source>
</evidence>
<evidence type="ECO:0000303" key="3">
    <source>
    </source>
</evidence>
<evidence type="ECO:0000305" key="4"/>
<keyword id="KW-0223">Dioxygenase</keyword>
<keyword id="KW-0408">Iron</keyword>
<keyword id="KW-0479">Metal-binding</keyword>
<keyword id="KW-0560">Oxidoreductase</keyword>
<keyword id="KW-1185">Reference proteome</keyword>
<proteinExistence type="evidence at protein level"/>